<organism>
    <name type="scientific">Salmonella newport (strain SL254)</name>
    <dbReference type="NCBI Taxonomy" id="423368"/>
    <lineage>
        <taxon>Bacteria</taxon>
        <taxon>Pseudomonadati</taxon>
        <taxon>Pseudomonadota</taxon>
        <taxon>Gammaproteobacteria</taxon>
        <taxon>Enterobacterales</taxon>
        <taxon>Enterobacteriaceae</taxon>
        <taxon>Salmonella</taxon>
    </lineage>
</organism>
<gene>
    <name evidence="1" type="primary">tsgA</name>
    <name type="ordered locus">SNSL254_A3743</name>
</gene>
<protein>
    <recommendedName>
        <fullName evidence="1">Protein TsgA</fullName>
    </recommendedName>
</protein>
<sequence>MTNSNRIKLTWISFLSYALTGALVIVTGMVMGNIADYFQLPVSSMSNTFTFLNAGILISIFLNAWLMEIIPLKTQLRFGFILMVLAVAGLMFSHSLALFSAAMFVLGLVSGITMSIGTFLITQLYEGRQRGSRLLFTDSFFSMAGMIFPMVAAFLLARSIEWYWVYACIGLVYLAIFILTFGCEFPALGKHAQHSQAPVVKEKWGIGVLFLAVAALCYILGQLGFISWVPEYAKGLGMSLNDAGALVSDFWMSYMFGMWAFSFILRFFDLQRILTVLAGMAAVLMYLFITGTQAHMPWFILTLGFFSSAIYTSIITLGSQQTKVASPKLVNFILTCGTIGTMLTFVVTGPIVAHSGPQAALLTANGLYAVVFVMCFALGFVSRHRQHSAPATH</sequence>
<reference key="1">
    <citation type="journal article" date="2011" name="J. Bacteriol.">
        <title>Comparative genomics of 28 Salmonella enterica isolates: evidence for CRISPR-mediated adaptive sublineage evolution.</title>
        <authorList>
            <person name="Fricke W.F."/>
            <person name="Mammel M.K."/>
            <person name="McDermott P.F."/>
            <person name="Tartera C."/>
            <person name="White D.G."/>
            <person name="Leclerc J.E."/>
            <person name="Ravel J."/>
            <person name="Cebula T.A."/>
        </authorList>
    </citation>
    <scope>NUCLEOTIDE SEQUENCE [LARGE SCALE GENOMIC DNA]</scope>
    <source>
        <strain>SL254</strain>
    </source>
</reference>
<feature type="chain" id="PRO_1000136150" description="Protein TsgA">
    <location>
        <begin position="1"/>
        <end position="393"/>
    </location>
</feature>
<feature type="transmembrane region" description="Helical" evidence="1">
    <location>
        <begin position="11"/>
        <end position="31"/>
    </location>
</feature>
<feature type="transmembrane region" description="Helical" evidence="1">
    <location>
        <begin position="51"/>
        <end position="71"/>
    </location>
</feature>
<feature type="transmembrane region" description="Helical" evidence="1">
    <location>
        <begin position="78"/>
        <end position="98"/>
    </location>
</feature>
<feature type="transmembrane region" description="Helical" evidence="1">
    <location>
        <begin position="101"/>
        <end position="121"/>
    </location>
</feature>
<feature type="transmembrane region" description="Helical" evidence="1">
    <location>
        <begin position="134"/>
        <end position="154"/>
    </location>
</feature>
<feature type="transmembrane region" description="Helical" evidence="1">
    <location>
        <begin position="162"/>
        <end position="182"/>
    </location>
</feature>
<feature type="transmembrane region" description="Helical" evidence="1">
    <location>
        <begin position="206"/>
        <end position="226"/>
    </location>
</feature>
<feature type="transmembrane region" description="Helical" evidence="1">
    <location>
        <begin position="245"/>
        <end position="265"/>
    </location>
</feature>
<feature type="transmembrane region" description="Helical" evidence="1">
    <location>
        <begin position="273"/>
        <end position="293"/>
    </location>
</feature>
<feature type="transmembrane region" description="Helical" evidence="1">
    <location>
        <begin position="298"/>
        <end position="318"/>
    </location>
</feature>
<feature type="transmembrane region" description="Helical" evidence="1">
    <location>
        <begin position="332"/>
        <end position="352"/>
    </location>
</feature>
<feature type="transmembrane region" description="Helical" evidence="1">
    <location>
        <begin position="361"/>
        <end position="381"/>
    </location>
</feature>
<keyword id="KW-0997">Cell inner membrane</keyword>
<keyword id="KW-1003">Cell membrane</keyword>
<keyword id="KW-0472">Membrane</keyword>
<keyword id="KW-0812">Transmembrane</keyword>
<keyword id="KW-1133">Transmembrane helix</keyword>
<dbReference type="EMBL" id="CP001113">
    <property type="protein sequence ID" value="ACF65129.1"/>
    <property type="molecule type" value="Genomic_DNA"/>
</dbReference>
<dbReference type="RefSeq" id="WP_000185267.1">
    <property type="nucleotide sequence ID" value="NZ_CCMR01000004.1"/>
</dbReference>
<dbReference type="SMR" id="B4SVH5"/>
<dbReference type="KEGG" id="see:SNSL254_A3743"/>
<dbReference type="HOGENOM" id="CLU_056916_0_0_6"/>
<dbReference type="Proteomes" id="UP000008824">
    <property type="component" value="Chromosome"/>
</dbReference>
<dbReference type="GO" id="GO:0005886">
    <property type="term" value="C:plasma membrane"/>
    <property type="evidence" value="ECO:0007669"/>
    <property type="project" value="UniProtKB-SubCell"/>
</dbReference>
<dbReference type="GO" id="GO:0022857">
    <property type="term" value="F:transmembrane transporter activity"/>
    <property type="evidence" value="ECO:0007669"/>
    <property type="project" value="InterPro"/>
</dbReference>
<dbReference type="FunFam" id="1.20.1250.20:FF:000032">
    <property type="entry name" value="Protein TsgA"/>
    <property type="match status" value="1"/>
</dbReference>
<dbReference type="FunFam" id="1.20.1250.20:FF:000052">
    <property type="entry name" value="Protein TsgA"/>
    <property type="match status" value="1"/>
</dbReference>
<dbReference type="Gene3D" id="1.20.1250.20">
    <property type="entry name" value="MFS general substrate transporter like domains"/>
    <property type="match status" value="2"/>
</dbReference>
<dbReference type="HAMAP" id="MF_01044">
    <property type="entry name" value="MFS_TsgA"/>
    <property type="match status" value="1"/>
</dbReference>
<dbReference type="InterPro" id="IPR011701">
    <property type="entry name" value="MFS"/>
</dbReference>
<dbReference type="InterPro" id="IPR020846">
    <property type="entry name" value="MFS_dom"/>
</dbReference>
<dbReference type="InterPro" id="IPR036259">
    <property type="entry name" value="MFS_trans_sf"/>
</dbReference>
<dbReference type="InterPro" id="IPR023528">
    <property type="entry name" value="MFS_TsgA"/>
</dbReference>
<dbReference type="InterPro" id="IPR050375">
    <property type="entry name" value="MFS_TsgA-like"/>
</dbReference>
<dbReference type="NCBIfam" id="NF002982">
    <property type="entry name" value="PRK03699.1"/>
    <property type="match status" value="1"/>
</dbReference>
<dbReference type="PANTHER" id="PTHR43702">
    <property type="entry name" value="L-FUCOSE-PROTON SYMPORTER"/>
    <property type="match status" value="1"/>
</dbReference>
<dbReference type="PANTHER" id="PTHR43702:SF3">
    <property type="entry name" value="PROTEIN TSGA"/>
    <property type="match status" value="1"/>
</dbReference>
<dbReference type="Pfam" id="PF07690">
    <property type="entry name" value="MFS_1"/>
    <property type="match status" value="1"/>
</dbReference>
<dbReference type="SUPFAM" id="SSF103473">
    <property type="entry name" value="MFS general substrate transporter"/>
    <property type="match status" value="1"/>
</dbReference>
<dbReference type="PROSITE" id="PS50850">
    <property type="entry name" value="MFS"/>
    <property type="match status" value="1"/>
</dbReference>
<accession>B4SVH5</accession>
<proteinExistence type="inferred from homology"/>
<name>TSGA_SALNS</name>
<evidence type="ECO:0000255" key="1">
    <source>
        <dbReference type="HAMAP-Rule" id="MF_01044"/>
    </source>
</evidence>
<comment type="subcellular location">
    <subcellularLocation>
        <location evidence="1">Cell inner membrane</location>
        <topology evidence="1">Multi-pass membrane protein</topology>
    </subcellularLocation>
</comment>
<comment type="similarity">
    <text evidence="1">Belongs to the major facilitator superfamily. TsgA family.</text>
</comment>